<name>RS3_LACLM</name>
<protein>
    <recommendedName>
        <fullName evidence="1">Small ribosomal subunit protein uS3</fullName>
    </recommendedName>
    <alternativeName>
        <fullName evidence="2">30S ribosomal protein S3</fullName>
    </alternativeName>
</protein>
<keyword id="KW-0002">3D-structure</keyword>
<keyword id="KW-0687">Ribonucleoprotein</keyword>
<keyword id="KW-0689">Ribosomal protein</keyword>
<keyword id="KW-0694">RNA-binding</keyword>
<keyword id="KW-0699">rRNA-binding</keyword>
<organism>
    <name type="scientific">Lactococcus lactis subsp. cremoris (strain MG1363)</name>
    <dbReference type="NCBI Taxonomy" id="416870"/>
    <lineage>
        <taxon>Bacteria</taxon>
        <taxon>Bacillati</taxon>
        <taxon>Bacillota</taxon>
        <taxon>Bacilli</taxon>
        <taxon>Lactobacillales</taxon>
        <taxon>Streptococcaceae</taxon>
        <taxon>Lactococcus</taxon>
        <taxon>Lactococcus cremoris subsp. cremoris</taxon>
    </lineage>
</organism>
<gene>
    <name evidence="1" type="primary">rpsC</name>
    <name type="ordered locus">llmg_2377</name>
</gene>
<comment type="function">
    <text evidence="1">Binds the lower part of the 30S subunit head. Binds mRNA in the 70S ribosome, positioning it for translation.</text>
</comment>
<comment type="subunit">
    <text evidence="1">Part of the 30S ribosomal subunit. Forms a tight complex with proteins S10 and S14.</text>
</comment>
<comment type="similarity">
    <text evidence="1">Belongs to the universal ribosomal protein uS3 family.</text>
</comment>
<evidence type="ECO:0000255" key="1">
    <source>
        <dbReference type="HAMAP-Rule" id="MF_01309"/>
    </source>
</evidence>
<evidence type="ECO:0000305" key="2"/>
<reference key="1">
    <citation type="journal article" date="2007" name="J. Bacteriol.">
        <title>The complete genome sequence of the lactic acid bacterial paradigm Lactococcus lactis subsp. cremoris MG1363.</title>
        <authorList>
            <person name="Wegmann U."/>
            <person name="O'Connell-Motherway M."/>
            <person name="Zomer A."/>
            <person name="Buist G."/>
            <person name="Shearman C."/>
            <person name="Canchaya C."/>
            <person name="Ventura M."/>
            <person name="Goesmann A."/>
            <person name="Gasson M.J."/>
            <person name="Kuipers O.P."/>
            <person name="van Sinderen D."/>
            <person name="Kok J."/>
        </authorList>
    </citation>
    <scope>NUCLEOTIDE SEQUENCE [LARGE SCALE GENOMIC DNA]</scope>
    <source>
        <strain>MG1363</strain>
    </source>
</reference>
<feature type="chain" id="PRO_0000293812" description="Small ribosomal subunit protein uS3">
    <location>
        <begin position="1"/>
        <end position="217"/>
    </location>
</feature>
<feature type="domain" description="KH type-2" evidence="1">
    <location>
        <begin position="38"/>
        <end position="106"/>
    </location>
</feature>
<sequence>MGQKVHPIGMRVGVIRDWDAKWYAEKEYADYLHEDLAIRQLIQTKLADASVSLIETERAINKVIVTLHTAKPGMVIGKSGANVDALRAELNKLTGKQVHINIVEIKKPDLDAHLVGEGIAKQLEARIAFRRAQKQAIQRAMRAGAKGIKTQVSGRLNGADIARAEGYSEGTVPLHTLRADIDYAWEEADTTYGKLGVKVWIYRGEVLPTKKSVKGEK</sequence>
<dbReference type="EMBL" id="AM406671">
    <property type="protein sequence ID" value="CAL98940.1"/>
    <property type="molecule type" value="Genomic_DNA"/>
</dbReference>
<dbReference type="RefSeq" id="WP_003129960.1">
    <property type="nucleotide sequence ID" value="NZ_WJVF01000005.1"/>
</dbReference>
<dbReference type="PDB" id="5MYJ">
    <property type="method" value="EM"/>
    <property type="resolution" value="5.60 A"/>
    <property type="chains" value="AC=1-217"/>
</dbReference>
<dbReference type="PDBsum" id="5MYJ"/>
<dbReference type="EMDB" id="EMD-3581"/>
<dbReference type="SMR" id="A2RNP9"/>
<dbReference type="STRING" id="416870.llmg_2377"/>
<dbReference type="GeneID" id="89634440"/>
<dbReference type="KEGG" id="llm:llmg_2377"/>
<dbReference type="eggNOG" id="COG0092">
    <property type="taxonomic scope" value="Bacteria"/>
</dbReference>
<dbReference type="HOGENOM" id="CLU_058591_0_2_9"/>
<dbReference type="OrthoDB" id="9806396at2"/>
<dbReference type="PhylomeDB" id="A2RNP9"/>
<dbReference type="Proteomes" id="UP000000364">
    <property type="component" value="Chromosome"/>
</dbReference>
<dbReference type="GO" id="GO:0022627">
    <property type="term" value="C:cytosolic small ribosomal subunit"/>
    <property type="evidence" value="ECO:0007669"/>
    <property type="project" value="TreeGrafter"/>
</dbReference>
<dbReference type="GO" id="GO:0003729">
    <property type="term" value="F:mRNA binding"/>
    <property type="evidence" value="ECO:0007669"/>
    <property type="project" value="UniProtKB-UniRule"/>
</dbReference>
<dbReference type="GO" id="GO:0019843">
    <property type="term" value="F:rRNA binding"/>
    <property type="evidence" value="ECO:0007669"/>
    <property type="project" value="UniProtKB-UniRule"/>
</dbReference>
<dbReference type="GO" id="GO:0003735">
    <property type="term" value="F:structural constituent of ribosome"/>
    <property type="evidence" value="ECO:0007669"/>
    <property type="project" value="InterPro"/>
</dbReference>
<dbReference type="GO" id="GO:0006412">
    <property type="term" value="P:translation"/>
    <property type="evidence" value="ECO:0007669"/>
    <property type="project" value="UniProtKB-UniRule"/>
</dbReference>
<dbReference type="CDD" id="cd02412">
    <property type="entry name" value="KH-II_30S_S3"/>
    <property type="match status" value="1"/>
</dbReference>
<dbReference type="FunFam" id="3.30.1140.32:FF:000001">
    <property type="entry name" value="30S ribosomal protein S3"/>
    <property type="match status" value="1"/>
</dbReference>
<dbReference type="FunFam" id="3.30.300.20:FF:000001">
    <property type="entry name" value="30S ribosomal protein S3"/>
    <property type="match status" value="1"/>
</dbReference>
<dbReference type="Gene3D" id="3.30.300.20">
    <property type="match status" value="1"/>
</dbReference>
<dbReference type="Gene3D" id="3.30.1140.32">
    <property type="entry name" value="Ribosomal protein S3, C-terminal domain"/>
    <property type="match status" value="1"/>
</dbReference>
<dbReference type="HAMAP" id="MF_01309_B">
    <property type="entry name" value="Ribosomal_uS3_B"/>
    <property type="match status" value="1"/>
</dbReference>
<dbReference type="InterPro" id="IPR004087">
    <property type="entry name" value="KH_dom"/>
</dbReference>
<dbReference type="InterPro" id="IPR015946">
    <property type="entry name" value="KH_dom-like_a/b"/>
</dbReference>
<dbReference type="InterPro" id="IPR004044">
    <property type="entry name" value="KH_dom_type_2"/>
</dbReference>
<dbReference type="InterPro" id="IPR009019">
    <property type="entry name" value="KH_sf_prok-type"/>
</dbReference>
<dbReference type="InterPro" id="IPR036419">
    <property type="entry name" value="Ribosomal_S3_C_sf"/>
</dbReference>
<dbReference type="InterPro" id="IPR005704">
    <property type="entry name" value="Ribosomal_uS3_bac-typ"/>
</dbReference>
<dbReference type="InterPro" id="IPR001351">
    <property type="entry name" value="Ribosomal_uS3_C"/>
</dbReference>
<dbReference type="InterPro" id="IPR018280">
    <property type="entry name" value="Ribosomal_uS3_CS"/>
</dbReference>
<dbReference type="NCBIfam" id="TIGR01009">
    <property type="entry name" value="rpsC_bact"/>
    <property type="match status" value="1"/>
</dbReference>
<dbReference type="PANTHER" id="PTHR11760">
    <property type="entry name" value="30S/40S RIBOSOMAL PROTEIN S3"/>
    <property type="match status" value="1"/>
</dbReference>
<dbReference type="PANTHER" id="PTHR11760:SF19">
    <property type="entry name" value="SMALL RIBOSOMAL SUBUNIT PROTEIN US3C"/>
    <property type="match status" value="1"/>
</dbReference>
<dbReference type="Pfam" id="PF07650">
    <property type="entry name" value="KH_2"/>
    <property type="match status" value="1"/>
</dbReference>
<dbReference type="Pfam" id="PF00189">
    <property type="entry name" value="Ribosomal_S3_C"/>
    <property type="match status" value="1"/>
</dbReference>
<dbReference type="SMART" id="SM00322">
    <property type="entry name" value="KH"/>
    <property type="match status" value="1"/>
</dbReference>
<dbReference type="SUPFAM" id="SSF54814">
    <property type="entry name" value="Prokaryotic type KH domain (KH-domain type II)"/>
    <property type="match status" value="1"/>
</dbReference>
<dbReference type="SUPFAM" id="SSF54821">
    <property type="entry name" value="Ribosomal protein S3 C-terminal domain"/>
    <property type="match status" value="1"/>
</dbReference>
<dbReference type="PROSITE" id="PS50823">
    <property type="entry name" value="KH_TYPE_2"/>
    <property type="match status" value="1"/>
</dbReference>
<dbReference type="PROSITE" id="PS00548">
    <property type="entry name" value="RIBOSOMAL_S3"/>
    <property type="match status" value="1"/>
</dbReference>
<proteinExistence type="evidence at protein level"/>
<accession>A2RNP9</accession>